<comment type="function">
    <text evidence="2">Responsible for O-acetylation at the C(6)-hydroxyl group of N-acetylmuramyl residues, forming the corresponding N,6-O-diacetylmuramic acid of the peptidoglycan. O-acetylation of the peptidoglycan is the major determinant for lysozyme resistance.</text>
</comment>
<comment type="subcellular location">
    <subcellularLocation>
        <location evidence="1">Cell membrane</location>
        <topology evidence="1">Multi-pass membrane protein</topology>
    </subcellularLocation>
</comment>
<comment type="similarity">
    <text evidence="4">Belongs to the acyltransferase 3 family.</text>
</comment>
<feature type="chain" id="PRO_0000208090" description="O-acetyltransferase OatA">
    <location>
        <begin position="1"/>
        <end position="603"/>
    </location>
</feature>
<feature type="transmembrane region" description="Helical" evidence="3">
    <location>
        <begin position="17"/>
        <end position="37"/>
    </location>
</feature>
<feature type="transmembrane region" description="Helical" evidence="3">
    <location>
        <begin position="45"/>
        <end position="65"/>
    </location>
</feature>
<feature type="transmembrane region" description="Helical" evidence="3">
    <location>
        <begin position="87"/>
        <end position="107"/>
    </location>
</feature>
<feature type="transmembrane region" description="Helical" evidence="3">
    <location>
        <begin position="148"/>
        <end position="168"/>
    </location>
</feature>
<feature type="transmembrane region" description="Helical" evidence="3">
    <location>
        <begin position="177"/>
        <end position="197"/>
    </location>
</feature>
<feature type="transmembrane region" description="Helical" evidence="3">
    <location>
        <begin position="211"/>
        <end position="231"/>
    </location>
</feature>
<feature type="transmembrane region" description="Helical" evidence="3">
    <location>
        <begin position="239"/>
        <end position="259"/>
    </location>
</feature>
<feature type="transmembrane region" description="Helical" evidence="3">
    <location>
        <begin position="268"/>
        <end position="288"/>
    </location>
</feature>
<feature type="transmembrane region" description="Helical" evidence="3">
    <location>
        <begin position="311"/>
        <end position="331"/>
    </location>
</feature>
<feature type="transmembrane region" description="Helical" evidence="3">
    <location>
        <begin position="333"/>
        <end position="353"/>
    </location>
</feature>
<feature type="transmembrane region" description="Helical" evidence="3">
    <location>
        <begin position="382"/>
        <end position="402"/>
    </location>
</feature>
<feature type="active site" evidence="2">
    <location>
        <position position="453"/>
    </location>
</feature>
<feature type="active site" evidence="2">
    <location>
        <position position="575"/>
    </location>
</feature>
<feature type="active site" evidence="2">
    <location>
        <position position="578"/>
    </location>
</feature>
<keyword id="KW-0012">Acyltransferase</keyword>
<keyword id="KW-1003">Cell membrane</keyword>
<keyword id="KW-0472">Membrane</keyword>
<keyword id="KW-0808">Transferase</keyword>
<keyword id="KW-0812">Transmembrane</keyword>
<keyword id="KW-1133">Transmembrane helix</keyword>
<reference key="1">
    <citation type="journal article" date="2002" name="Lancet">
        <title>Genome and virulence determinants of high virulence community-acquired MRSA.</title>
        <authorList>
            <person name="Baba T."/>
            <person name="Takeuchi F."/>
            <person name="Kuroda M."/>
            <person name="Yuzawa H."/>
            <person name="Aoki K."/>
            <person name="Oguchi A."/>
            <person name="Nagai Y."/>
            <person name="Iwama N."/>
            <person name="Asano K."/>
            <person name="Naimi T."/>
            <person name="Kuroda H."/>
            <person name="Cui L."/>
            <person name="Yamamoto K."/>
            <person name="Hiramatsu K."/>
        </authorList>
    </citation>
    <scope>NUCLEOTIDE SEQUENCE [LARGE SCALE GENOMIC DNA]</scope>
    <source>
        <strain>MW2</strain>
    </source>
</reference>
<sequence>MDTKDFKRLEKMYSPRYLPGLDGLRAFAVIGIIIYHLNAQWLSGGFLGVDTFFVISGYLITSLLISEYYRTQKIDLLEFWKRRLKRLIPAVLFLICVVLTFTLIFKPELIIQMKRDAIAAIFYVSNWWYISQNVDYFNQFAIEPLKHLWSLAIEEQFYLLFPLVITFLLHRFKPRNIIQTLFIVSLISLGLMIVIHFITGDNSRVYFGTDTRLQTLLLGCILAFIWPPFALKKDISKKIVVSLDIIGISGFAVLMTLFFIVGDQDQWIYNGGFYIISFATLFIIAIAVHPSSLFAKFLSMKPLLIIGKRSYSLYLWHYPIIVFVNSYYVQGQIPVYVYIIEILLTALMAEISYRFIETPIRKKGFKAFAFLPKKKGQFARTVLVILLLVPSIVVLSGQFDALGKQHEAEKKEKKTEFKTTKKKVVKKDKQEDKQTANSKEDIKKSSPLLIGDSVMVDIGNVFTKKIPNAQIDGKVGRQLVDATPIVKSQYKDYAKKGQKVVVELGTNGAFTKDQLNELLDSFGKADIYLVSIRVPRDYEGRINKLIYEAAEKRSNVHLVDWYKASAGHPEYFAYDGIHLEYAGSKALTDLIVKTMETHATNKK</sequence>
<dbReference type="EC" id="2.3.1.-" evidence="2"/>
<dbReference type="EMBL" id="BA000033">
    <property type="protein sequence ID" value="BAB96353.1"/>
    <property type="molecule type" value="Genomic_DNA"/>
</dbReference>
<dbReference type="RefSeq" id="WP_000379821.1">
    <property type="nucleotide sequence ID" value="NC_003923.1"/>
</dbReference>
<dbReference type="SMR" id="Q79ZY2"/>
<dbReference type="KEGG" id="sam:MW2488"/>
<dbReference type="HOGENOM" id="CLU_005679_11_2_9"/>
<dbReference type="GO" id="GO:0005886">
    <property type="term" value="C:plasma membrane"/>
    <property type="evidence" value="ECO:0007669"/>
    <property type="project" value="UniProtKB-SubCell"/>
</dbReference>
<dbReference type="GO" id="GO:0016747">
    <property type="term" value="F:acyltransferase activity, transferring groups other than amino-acyl groups"/>
    <property type="evidence" value="ECO:0007669"/>
    <property type="project" value="InterPro"/>
</dbReference>
<dbReference type="GO" id="GO:0009103">
    <property type="term" value="P:lipopolysaccharide biosynthetic process"/>
    <property type="evidence" value="ECO:0007669"/>
    <property type="project" value="TreeGrafter"/>
</dbReference>
<dbReference type="CDD" id="cd01840">
    <property type="entry name" value="SGNH_hydrolase_yrhL_like"/>
    <property type="match status" value="1"/>
</dbReference>
<dbReference type="FunFam" id="3.40.50.1110:FF:000006">
    <property type="entry name" value="O-acetyltransferase OatA"/>
    <property type="match status" value="1"/>
</dbReference>
<dbReference type="Gene3D" id="3.40.50.1110">
    <property type="entry name" value="SGNH hydrolase"/>
    <property type="match status" value="1"/>
</dbReference>
<dbReference type="InterPro" id="IPR002656">
    <property type="entry name" value="Acyl_transf_3_dom"/>
</dbReference>
<dbReference type="InterPro" id="IPR050879">
    <property type="entry name" value="Acyltransferase_3"/>
</dbReference>
<dbReference type="InterPro" id="IPR036514">
    <property type="entry name" value="SGNH_hydro_sf"/>
</dbReference>
<dbReference type="PANTHER" id="PTHR23028">
    <property type="entry name" value="ACETYLTRANSFERASE"/>
    <property type="match status" value="1"/>
</dbReference>
<dbReference type="PANTHER" id="PTHR23028:SF53">
    <property type="entry name" value="ACYL_TRANSF_3 DOMAIN-CONTAINING PROTEIN"/>
    <property type="match status" value="1"/>
</dbReference>
<dbReference type="Pfam" id="PF01757">
    <property type="entry name" value="Acyl_transf_3"/>
    <property type="match status" value="1"/>
</dbReference>
<dbReference type="SUPFAM" id="SSF52266">
    <property type="entry name" value="SGNH hydrolase"/>
    <property type="match status" value="1"/>
</dbReference>
<name>OATA_STAAW</name>
<accession>Q79ZY2</accession>
<gene>
    <name type="primary">oatA</name>
    <name type="ordered locus">MW2488</name>
</gene>
<protein>
    <recommendedName>
        <fullName>O-acetyltransferase OatA</fullName>
        <ecNumber evidence="2">2.3.1.-</ecNumber>
    </recommendedName>
</protein>
<proteinExistence type="inferred from homology"/>
<organism>
    <name type="scientific">Staphylococcus aureus (strain MW2)</name>
    <dbReference type="NCBI Taxonomy" id="196620"/>
    <lineage>
        <taxon>Bacteria</taxon>
        <taxon>Bacillati</taxon>
        <taxon>Bacillota</taxon>
        <taxon>Bacilli</taxon>
        <taxon>Bacillales</taxon>
        <taxon>Staphylococcaceae</taxon>
        <taxon>Staphylococcus</taxon>
    </lineage>
</organism>
<evidence type="ECO:0000250" key="1"/>
<evidence type="ECO:0000250" key="2">
    <source>
        <dbReference type="UniProtKB" id="Q2FV54"/>
    </source>
</evidence>
<evidence type="ECO:0000255" key="3"/>
<evidence type="ECO:0000305" key="4"/>